<comment type="function">
    <text evidence="1 2">Carboxypeptidase that catalyzes the release of a C-terminal amino acid, but has little or no action with -Asp, -Glu, -Arg, -Lys or -Pro (By similarity). Catalyzes the conversion of leukotriene C4 to leukotriene F4 via the hydrolysis of an amide bond (By similarity).</text>
</comment>
<comment type="catalytic activity">
    <reaction evidence="2">
        <text>Release of a C-terminal amino acid, but little or no action with -Asp, -Glu, -Arg, -Lys or -Pro.</text>
        <dbReference type="EC" id="3.4.17.1"/>
    </reaction>
</comment>
<comment type="catalytic activity">
    <reaction evidence="1">
        <text>leukotriene C4 + H2O = leukotriene F4 + glycine</text>
        <dbReference type="Rhea" id="RHEA:50740"/>
        <dbReference type="ChEBI" id="CHEBI:15377"/>
        <dbReference type="ChEBI" id="CHEBI:57305"/>
        <dbReference type="ChEBI" id="CHEBI:57973"/>
        <dbReference type="ChEBI" id="CHEBI:133618"/>
    </reaction>
    <physiologicalReaction direction="left-to-right" evidence="1">
        <dbReference type="Rhea" id="RHEA:50741"/>
    </physiologicalReaction>
</comment>
<comment type="cofactor">
    <cofactor evidence="5">
        <name>Zn(2+)</name>
        <dbReference type="ChEBI" id="CHEBI:29105"/>
    </cofactor>
    <text evidence="5">Binds 1 zinc ion per subunit.</text>
</comment>
<comment type="subunit">
    <text evidence="2">Monomer. May form a complex with proelastase 2.</text>
</comment>
<comment type="subcellular location">
    <subcellularLocation>
        <location evidence="3">Secreted</location>
    </subcellularLocation>
</comment>
<comment type="similarity">
    <text evidence="7">Belongs to the peptidase M14 family.</text>
</comment>
<name>CBPA1_PIG</name>
<organism>
    <name type="scientific">Sus scrofa</name>
    <name type="common">Pig</name>
    <dbReference type="NCBI Taxonomy" id="9823"/>
    <lineage>
        <taxon>Eukaryota</taxon>
        <taxon>Metazoa</taxon>
        <taxon>Chordata</taxon>
        <taxon>Craniata</taxon>
        <taxon>Vertebrata</taxon>
        <taxon>Euteleostomi</taxon>
        <taxon>Mammalia</taxon>
        <taxon>Eutheria</taxon>
        <taxon>Laurasiatheria</taxon>
        <taxon>Artiodactyla</taxon>
        <taxon>Suina</taxon>
        <taxon>Suidae</taxon>
        <taxon>Sus</taxon>
    </lineage>
</organism>
<accession>P09954</accession>
<accession>Q9TV85</accession>
<proteinExistence type="evidence at protein level"/>
<sequence>MWGLLIFSVLLGGVLAKEDFVGHQVLRISVDDEAQVQKVKELEDLEHLQLDFWRGPARPGFPIDVRVPFPSIQAVKVFLEAHGIRYTIMIEDVQLLLDEEQEQMFASQGRARTTSTFNYATYHTLEEIYDFMDILVAEHPQLVSKLQIGSSYEGRPIYVLKFSTGGNNRPAIWIDTGIHSREWVTQASGVWFAKKITEDYGQDPAFTAILDNLDIFLEIVTNPDGFAFTHSENRMWRKTRSRTSGSFCVGVDPNRNWDAGFGGAGASSNPCSETYHGKFPNSEVEVKSIVDFVNDHGNIKAFISIHSYSQLLLYPYGYKTEAPADKDELDQISKSAVAALTSLYGTKFQYGSIITTIYQASGGTIDWTYNQGIKYSFSFELRDTGRYGFLLPASQIIPTAQETWLALLTIMEHTLNHPY</sequence>
<gene>
    <name type="primary">CPA1</name>
    <name type="synonym">CPA</name>
</gene>
<dbReference type="EC" id="3.4.17.1" evidence="2"/>
<dbReference type="EMBL" id="AF076222">
    <property type="protein sequence ID" value="AAD17690.1"/>
    <property type="molecule type" value="mRNA"/>
</dbReference>
<dbReference type="PIR" id="A25833">
    <property type="entry name" value="A25833"/>
</dbReference>
<dbReference type="RefSeq" id="NP_999409.1">
    <property type="nucleotide sequence ID" value="NM_214244.1"/>
</dbReference>
<dbReference type="PDB" id="1PCA">
    <property type="method" value="X-ray"/>
    <property type="resolution" value="2.00 A"/>
    <property type="chains" value="A=17-416"/>
</dbReference>
<dbReference type="PDBsum" id="1PCA"/>
<dbReference type="SMR" id="P09954"/>
<dbReference type="FunCoup" id="P09954">
    <property type="interactions" value="261"/>
</dbReference>
<dbReference type="STRING" id="9823.ENSSSCP00000043883"/>
<dbReference type="MEROPS" id="M14.001"/>
<dbReference type="PaxDb" id="9823-ENSSSCP00000017542"/>
<dbReference type="PeptideAtlas" id="P09954"/>
<dbReference type="Ensembl" id="ENSSSCT00000018027.3">
    <property type="protein sequence ID" value="ENSSSCP00000017542.2"/>
    <property type="gene ID" value="ENSSSCG00000016557.5"/>
</dbReference>
<dbReference type="Ensembl" id="ENSSSCT00015109965.1">
    <property type="protein sequence ID" value="ENSSSCP00015046871.1"/>
    <property type="gene ID" value="ENSSSCG00015080770.1"/>
</dbReference>
<dbReference type="Ensembl" id="ENSSSCT00025005864.1">
    <property type="protein sequence ID" value="ENSSSCP00025002350.1"/>
    <property type="gene ID" value="ENSSSCG00025004377.1"/>
</dbReference>
<dbReference type="Ensembl" id="ENSSSCT00030101649.1">
    <property type="protein sequence ID" value="ENSSSCP00030046883.1"/>
    <property type="gene ID" value="ENSSSCG00030072216.1"/>
</dbReference>
<dbReference type="Ensembl" id="ENSSSCT00035095737.1">
    <property type="protein sequence ID" value="ENSSSCP00035040283.1"/>
    <property type="gene ID" value="ENSSSCG00035070804.1"/>
</dbReference>
<dbReference type="Ensembl" id="ENSSSCT00040089710.1">
    <property type="protein sequence ID" value="ENSSSCP00040039429.1"/>
    <property type="gene ID" value="ENSSSCG00040064161.1"/>
</dbReference>
<dbReference type="Ensembl" id="ENSSSCT00045022732.1">
    <property type="protein sequence ID" value="ENSSSCP00045015681.1"/>
    <property type="gene ID" value="ENSSSCG00045013082.1"/>
</dbReference>
<dbReference type="Ensembl" id="ENSSSCT00050040692.1">
    <property type="protein sequence ID" value="ENSSSCP00050016802.1"/>
    <property type="gene ID" value="ENSSSCG00050030259.1"/>
</dbReference>
<dbReference type="Ensembl" id="ENSSSCT00055049881.1">
    <property type="protein sequence ID" value="ENSSSCP00055039852.1"/>
    <property type="gene ID" value="ENSSSCG00055024544.1"/>
</dbReference>
<dbReference type="Ensembl" id="ENSSSCT00060073136.1">
    <property type="protein sequence ID" value="ENSSSCP00060031548.1"/>
    <property type="gene ID" value="ENSSSCG00060053692.1"/>
</dbReference>
<dbReference type="Ensembl" id="ENSSSCT00065065865.1">
    <property type="protein sequence ID" value="ENSSSCP00065028533.1"/>
    <property type="gene ID" value="ENSSSCG00065048136.1"/>
</dbReference>
<dbReference type="Ensembl" id="ENSSSCT00070055028.1">
    <property type="protein sequence ID" value="ENSSSCP00070046686.1"/>
    <property type="gene ID" value="ENSSSCG00070027422.1"/>
</dbReference>
<dbReference type="Ensembl" id="ENSSSCT00085003262">
    <property type="protein sequence ID" value="ENSSSCP00085002385"/>
    <property type="gene ID" value="ENSSSCG00085001981"/>
</dbReference>
<dbReference type="Ensembl" id="ENSSSCT00090001186">
    <property type="protein sequence ID" value="ENSSSCP00090000627"/>
    <property type="gene ID" value="ENSSSCG00090000782"/>
</dbReference>
<dbReference type="Ensembl" id="ENSSSCT00105023063">
    <property type="protein sequence ID" value="ENSSSCP00105016573"/>
    <property type="gene ID" value="ENSSSCG00105011653"/>
</dbReference>
<dbReference type="Ensembl" id="ENSSSCT00110071379">
    <property type="protein sequence ID" value="ENSSSCP00110050246"/>
    <property type="gene ID" value="ENSSSCG00110037545"/>
</dbReference>
<dbReference type="Ensembl" id="ENSSSCT00115035541">
    <property type="protein sequence ID" value="ENSSSCP00115033697"/>
    <property type="gene ID" value="ENSSSCG00115020077"/>
</dbReference>
<dbReference type="Ensembl" id="ENSSSCT00130000684">
    <property type="protein sequence ID" value="ENSSSCP00130000401"/>
    <property type="gene ID" value="ENSSSCG00130000437"/>
</dbReference>
<dbReference type="GeneID" id="397476"/>
<dbReference type="KEGG" id="ssc:397476"/>
<dbReference type="CTD" id="1357"/>
<dbReference type="VGNC" id="VGNC:86930">
    <property type="gene designation" value="CPA1"/>
</dbReference>
<dbReference type="eggNOG" id="KOG2650">
    <property type="taxonomic scope" value="Eukaryota"/>
</dbReference>
<dbReference type="GeneTree" id="ENSGT00940000158082"/>
<dbReference type="HOGENOM" id="CLU_019326_0_0_1"/>
<dbReference type="InParanoid" id="P09954"/>
<dbReference type="OMA" id="MFAFHSQ"/>
<dbReference type="OrthoDB" id="3626597at2759"/>
<dbReference type="TreeFam" id="TF317197"/>
<dbReference type="EvolutionaryTrace" id="P09954"/>
<dbReference type="Proteomes" id="UP000008227">
    <property type="component" value="Chromosome 18"/>
</dbReference>
<dbReference type="Proteomes" id="UP000314985">
    <property type="component" value="Chromosome 18"/>
</dbReference>
<dbReference type="Proteomes" id="UP000694570">
    <property type="component" value="Unplaced"/>
</dbReference>
<dbReference type="Proteomes" id="UP000694571">
    <property type="component" value="Unplaced"/>
</dbReference>
<dbReference type="Proteomes" id="UP000694720">
    <property type="component" value="Unplaced"/>
</dbReference>
<dbReference type="Proteomes" id="UP000694722">
    <property type="component" value="Unplaced"/>
</dbReference>
<dbReference type="Proteomes" id="UP000694723">
    <property type="component" value="Unplaced"/>
</dbReference>
<dbReference type="Proteomes" id="UP000694724">
    <property type="component" value="Unplaced"/>
</dbReference>
<dbReference type="Proteomes" id="UP000694725">
    <property type="component" value="Unplaced"/>
</dbReference>
<dbReference type="Proteomes" id="UP000694726">
    <property type="component" value="Unplaced"/>
</dbReference>
<dbReference type="Proteomes" id="UP000694727">
    <property type="component" value="Unplaced"/>
</dbReference>
<dbReference type="Proteomes" id="UP000694728">
    <property type="component" value="Unplaced"/>
</dbReference>
<dbReference type="Bgee" id="ENSSSCG00000016557">
    <property type="expression patterns" value="Expressed in testis and 30 other cell types or tissues"/>
</dbReference>
<dbReference type="ExpressionAtlas" id="P09954">
    <property type="expression patterns" value="baseline and differential"/>
</dbReference>
<dbReference type="GO" id="GO:0005615">
    <property type="term" value="C:extracellular space"/>
    <property type="evidence" value="ECO:0000318"/>
    <property type="project" value="GO_Central"/>
</dbReference>
<dbReference type="GO" id="GO:0004181">
    <property type="term" value="F:metallocarboxypeptidase activity"/>
    <property type="evidence" value="ECO:0000250"/>
    <property type="project" value="UniProtKB"/>
</dbReference>
<dbReference type="GO" id="GO:0008270">
    <property type="term" value="F:zinc ion binding"/>
    <property type="evidence" value="ECO:0007669"/>
    <property type="project" value="InterPro"/>
</dbReference>
<dbReference type="GO" id="GO:0006691">
    <property type="term" value="P:leukotriene metabolic process"/>
    <property type="evidence" value="ECO:0000250"/>
    <property type="project" value="UniProtKB"/>
</dbReference>
<dbReference type="GO" id="GO:0006508">
    <property type="term" value="P:proteolysis"/>
    <property type="evidence" value="ECO:0000318"/>
    <property type="project" value="GO_Central"/>
</dbReference>
<dbReference type="CDD" id="cd03870">
    <property type="entry name" value="M14_CPA"/>
    <property type="match status" value="1"/>
</dbReference>
<dbReference type="FunFam" id="3.40.630.10:FF:000132">
    <property type="entry name" value="Carboxypeptidase A1"/>
    <property type="match status" value="1"/>
</dbReference>
<dbReference type="FunFam" id="3.30.70.340:FF:000001">
    <property type="entry name" value="Carboxypeptidase A5"/>
    <property type="match status" value="1"/>
</dbReference>
<dbReference type="Gene3D" id="3.30.70.340">
    <property type="entry name" value="Metallocarboxypeptidase-like"/>
    <property type="match status" value="1"/>
</dbReference>
<dbReference type="Gene3D" id="3.40.630.10">
    <property type="entry name" value="Zn peptidases"/>
    <property type="match status" value="1"/>
</dbReference>
<dbReference type="InterPro" id="IPR034248">
    <property type="entry name" value="CPA_M14_CPD"/>
</dbReference>
<dbReference type="InterPro" id="IPR036990">
    <property type="entry name" value="M14A-like_propep"/>
</dbReference>
<dbReference type="InterPro" id="IPR003146">
    <property type="entry name" value="M14A_act_pep"/>
</dbReference>
<dbReference type="InterPro" id="IPR000834">
    <property type="entry name" value="Peptidase_M14"/>
</dbReference>
<dbReference type="PANTHER" id="PTHR11705:SF94">
    <property type="entry name" value="CARBOXYPEPTIDASE A1"/>
    <property type="match status" value="1"/>
</dbReference>
<dbReference type="PANTHER" id="PTHR11705">
    <property type="entry name" value="PROTEASE FAMILY M14 CARBOXYPEPTIDASE A,B"/>
    <property type="match status" value="1"/>
</dbReference>
<dbReference type="Pfam" id="PF00246">
    <property type="entry name" value="Peptidase_M14"/>
    <property type="match status" value="1"/>
</dbReference>
<dbReference type="Pfam" id="PF02244">
    <property type="entry name" value="Propep_M14"/>
    <property type="match status" value="1"/>
</dbReference>
<dbReference type="PRINTS" id="PR00765">
    <property type="entry name" value="CRBOXYPTASEA"/>
</dbReference>
<dbReference type="SMART" id="SM00631">
    <property type="entry name" value="Zn_pept"/>
    <property type="match status" value="1"/>
</dbReference>
<dbReference type="SUPFAM" id="SSF54897">
    <property type="entry name" value="Protease propeptides/inhibitors"/>
    <property type="match status" value="1"/>
</dbReference>
<dbReference type="SUPFAM" id="SSF53187">
    <property type="entry name" value="Zn-dependent exopeptidases"/>
    <property type="match status" value="1"/>
</dbReference>
<dbReference type="PROSITE" id="PS00132">
    <property type="entry name" value="CARBOXYPEPT_ZN_1"/>
    <property type="match status" value="1"/>
</dbReference>
<dbReference type="PROSITE" id="PS00133">
    <property type="entry name" value="CARBOXYPEPT_ZN_2"/>
    <property type="match status" value="1"/>
</dbReference>
<dbReference type="PROSITE" id="PS52035">
    <property type="entry name" value="PEPTIDASE_M14"/>
    <property type="match status" value="1"/>
</dbReference>
<feature type="signal peptide" evidence="6">
    <location>
        <begin position="1"/>
        <end position="16"/>
    </location>
</feature>
<feature type="propeptide" id="PRO_0000004349" description="Activation peptide">
    <location>
        <begin position="17"/>
        <end position="110"/>
    </location>
</feature>
<feature type="chain" id="PRO_0000004350" description="Carboxypeptidase A1">
    <location>
        <begin position="111"/>
        <end position="419"/>
    </location>
</feature>
<feature type="domain" description="Peptidase M14" evidence="4">
    <location>
        <begin position="121"/>
        <end position="414"/>
    </location>
</feature>
<feature type="active site" description="Proton donor/acceptor" evidence="4">
    <location>
        <position position="380"/>
    </location>
</feature>
<feature type="binding site" evidence="1">
    <location>
        <begin position="179"/>
        <end position="182"/>
    </location>
    <ligand>
        <name>substrate</name>
    </ligand>
</feature>
<feature type="binding site" evidence="4 8">
    <location>
        <position position="179"/>
    </location>
    <ligand>
        <name>Zn(2+)</name>
        <dbReference type="ChEBI" id="CHEBI:29105"/>
        <note>catalytic</note>
    </ligand>
</feature>
<feature type="binding site" evidence="4 8">
    <location>
        <position position="182"/>
    </location>
    <ligand>
        <name>Zn(2+)</name>
        <dbReference type="ChEBI" id="CHEBI:29105"/>
        <note>catalytic</note>
    </ligand>
</feature>
<feature type="binding site" evidence="1">
    <location>
        <position position="237"/>
    </location>
    <ligand>
        <name>substrate</name>
    </ligand>
</feature>
<feature type="binding site" evidence="1">
    <location>
        <begin position="254"/>
        <end position="255"/>
    </location>
    <ligand>
        <name>substrate</name>
    </ligand>
</feature>
<feature type="binding site" evidence="4 8">
    <location>
        <position position="306"/>
    </location>
    <ligand>
        <name>Zn(2+)</name>
        <dbReference type="ChEBI" id="CHEBI:29105"/>
        <note>catalytic</note>
    </ligand>
</feature>
<feature type="binding site" evidence="1">
    <location>
        <begin position="307"/>
        <end position="308"/>
    </location>
    <ligand>
        <name>substrate</name>
    </ligand>
</feature>
<feature type="binding site" evidence="1">
    <location>
        <position position="358"/>
    </location>
    <ligand>
        <name>substrate</name>
    </ligand>
</feature>
<feature type="disulfide bond" evidence="8">
    <location>
        <begin position="248"/>
        <end position="271"/>
    </location>
</feature>
<feature type="strand" evidence="9">
    <location>
        <begin position="24"/>
        <end position="28"/>
    </location>
</feature>
<feature type="helix" evidence="9">
    <location>
        <begin position="33"/>
        <end position="42"/>
    </location>
</feature>
<feature type="helix" evidence="9">
    <location>
        <begin position="46"/>
        <end position="48"/>
    </location>
</feature>
<feature type="strand" evidence="9">
    <location>
        <begin position="51"/>
        <end position="54"/>
    </location>
</feature>
<feature type="strand" evidence="9">
    <location>
        <begin position="63"/>
        <end position="67"/>
    </location>
</feature>
<feature type="helix" evidence="9">
    <location>
        <begin position="69"/>
        <end position="71"/>
    </location>
</feature>
<feature type="helix" evidence="9">
    <location>
        <begin position="72"/>
        <end position="81"/>
    </location>
</feature>
<feature type="strand" evidence="9">
    <location>
        <begin position="86"/>
        <end position="91"/>
    </location>
</feature>
<feature type="helix" evidence="9">
    <location>
        <begin position="93"/>
        <end position="106"/>
    </location>
</feature>
<feature type="helix" evidence="9">
    <location>
        <begin position="125"/>
        <end position="138"/>
    </location>
</feature>
<feature type="turn" evidence="9">
    <location>
        <begin position="140"/>
        <end position="142"/>
    </location>
</feature>
<feature type="strand" evidence="9">
    <location>
        <begin position="143"/>
        <end position="150"/>
    </location>
</feature>
<feature type="strand" evidence="9">
    <location>
        <begin position="156"/>
        <end position="162"/>
    </location>
</feature>
<feature type="strand" evidence="9">
    <location>
        <begin position="171"/>
        <end position="176"/>
    </location>
</feature>
<feature type="helix" evidence="9">
    <location>
        <begin position="183"/>
        <end position="199"/>
    </location>
</feature>
<feature type="turn" evidence="9">
    <location>
        <begin position="200"/>
        <end position="202"/>
    </location>
</feature>
<feature type="helix" evidence="9">
    <location>
        <begin position="204"/>
        <end position="210"/>
    </location>
</feature>
<feature type="strand" evidence="9">
    <location>
        <begin position="214"/>
        <end position="219"/>
    </location>
</feature>
<feature type="helix" evidence="9">
    <location>
        <begin position="223"/>
        <end position="231"/>
    </location>
</feature>
<feature type="helix" evidence="9">
    <location>
        <begin position="253"/>
        <end position="255"/>
    </location>
</feature>
<feature type="strand" evidence="9">
    <location>
        <begin position="257"/>
        <end position="260"/>
    </location>
</feature>
<feature type="strand" evidence="9">
    <location>
        <begin position="266"/>
        <end position="268"/>
    </location>
</feature>
<feature type="helix" evidence="9">
    <location>
        <begin position="284"/>
        <end position="296"/>
    </location>
</feature>
<feature type="strand" evidence="9">
    <location>
        <begin position="299"/>
        <end position="306"/>
    </location>
</feature>
<feature type="strand" evidence="9">
    <location>
        <begin position="308"/>
        <end position="315"/>
    </location>
</feature>
<feature type="helix" evidence="9">
    <location>
        <begin position="326"/>
        <end position="344"/>
    </location>
</feature>
<feature type="strand" evidence="9">
    <location>
        <begin position="349"/>
        <end position="352"/>
    </location>
</feature>
<feature type="helix" evidence="9">
    <location>
        <begin position="353"/>
        <end position="356"/>
    </location>
</feature>
<feature type="helix" evidence="9">
    <location>
        <begin position="364"/>
        <end position="370"/>
    </location>
</feature>
<feature type="strand" evidence="9">
    <location>
        <begin position="375"/>
        <end position="380"/>
    </location>
</feature>
<feature type="strand" evidence="9">
    <location>
        <begin position="384"/>
        <end position="387"/>
    </location>
</feature>
<feature type="helix" evidence="9">
    <location>
        <begin position="393"/>
        <end position="395"/>
    </location>
</feature>
<feature type="helix" evidence="9">
    <location>
        <begin position="396"/>
        <end position="416"/>
    </location>
</feature>
<reference key="1">
    <citation type="journal article" date="1999" name="Eur. J. Biochem.">
        <title>Cloning, sequencing and functional expression of a cDNA encoding porcine pancreatic preprocarboxypeptidase A1.</title>
        <authorList>
            <person name="Darnis S."/>
            <person name="Juge N."/>
            <person name="Marino C."/>
            <person name="Aviles F.X."/>
            <person name="Puigserver A."/>
            <person name="Chaix J.-C."/>
            <person name="Guo X.-J."/>
        </authorList>
    </citation>
    <scope>NUCLEOTIDE SEQUENCE [MRNA]</scope>
    <source>
        <tissue>Pancreas</tissue>
    </source>
</reference>
<reference key="2">
    <citation type="journal article" date="1986" name="Biochem. Biophys. Res. Commun.">
        <title>Primary structure of the activation segment of procarboxypeptidase A from porcine pancreas.</title>
        <authorList>
            <person name="Vendrell J."/>
            <person name="Aviles F.X."/>
            <person name="Genesca E."/>
            <person name="San Segundo B."/>
            <person name="Soriano F."/>
            <person name="Mendez E."/>
        </authorList>
    </citation>
    <scope>PROTEIN SEQUENCE OF 17-110</scope>
</reference>
<reference key="3">
    <citation type="journal article" date="1992" name="J. Mol. Biol.">
        <title>Three-dimensional structure of porcine pancreatic procarboxypeptidase A. A comparison of the A and B zymogens and their determinants for inhibition and activation.</title>
        <authorList>
            <person name="Guasch A."/>
            <person name="Coll M."/>
            <person name="Aviles F.X."/>
            <person name="Huber R."/>
        </authorList>
    </citation>
    <scope>X-RAY CRYSTALLOGRAPHY (2.00 ANGSTROMS) OF 17-416 IN COMPLEX WITH ZINC</scope>
    <scope>DISULFIDE BONDS</scope>
</reference>
<evidence type="ECO:0000250" key="1">
    <source>
        <dbReference type="UniProtKB" id="P00730"/>
    </source>
</evidence>
<evidence type="ECO:0000250" key="2">
    <source>
        <dbReference type="UniProtKB" id="P15085"/>
    </source>
</evidence>
<evidence type="ECO:0000250" key="3">
    <source>
        <dbReference type="UniProtKB" id="Q9UI42"/>
    </source>
</evidence>
<evidence type="ECO:0000255" key="4">
    <source>
        <dbReference type="PROSITE-ProRule" id="PRU01379"/>
    </source>
</evidence>
<evidence type="ECO:0000269" key="5">
    <source>
    </source>
</evidence>
<evidence type="ECO:0000269" key="6">
    <source>
    </source>
</evidence>
<evidence type="ECO:0000305" key="7"/>
<evidence type="ECO:0007744" key="8">
    <source>
        <dbReference type="PDB" id="1PCA"/>
    </source>
</evidence>
<evidence type="ECO:0007829" key="9">
    <source>
        <dbReference type="PDB" id="1PCA"/>
    </source>
</evidence>
<protein>
    <recommendedName>
        <fullName evidence="7">Carboxypeptidase A1</fullName>
        <ecNumber evidence="2">3.4.17.1</ecNumber>
    </recommendedName>
</protein>
<keyword id="KW-0002">3D-structure</keyword>
<keyword id="KW-0121">Carboxypeptidase</keyword>
<keyword id="KW-0903">Direct protein sequencing</keyword>
<keyword id="KW-1015">Disulfide bond</keyword>
<keyword id="KW-0378">Hydrolase</keyword>
<keyword id="KW-0479">Metal-binding</keyword>
<keyword id="KW-0482">Metalloprotease</keyword>
<keyword id="KW-0645">Protease</keyword>
<keyword id="KW-1185">Reference proteome</keyword>
<keyword id="KW-0964">Secreted</keyword>
<keyword id="KW-0732">Signal</keyword>
<keyword id="KW-0862">Zinc</keyword>
<keyword id="KW-0865">Zymogen</keyword>